<proteinExistence type="inferred from homology"/>
<keyword id="KW-0030">Aminoacyl-tRNA synthetase</keyword>
<keyword id="KW-0067">ATP-binding</keyword>
<keyword id="KW-0963">Cytoplasm</keyword>
<keyword id="KW-0436">Ligase</keyword>
<keyword id="KW-0547">Nucleotide-binding</keyword>
<keyword id="KW-0648">Protein biosynthesis</keyword>
<sequence>MRTHYCGHLNKSLAGQTVELCGWVNRRRDLGGLIFIDMRDREGIVQVVVDPDMADAYEVANTLRNEFCIKLTGEVRVRPESQVNKDMATGEVEILAKGLEIINRSDVLPLDFNQKNSEEQRLKYRYLDLRRPEMSDRIKLRAKASSFVRRFLDDNGFLDIETPVLTKATPEGARDYLVPSRVHKGSFYALPQSPQLFKQLLMMSGFDRYYQIVKCFRDEDLRADRQPEFTQIDIETSFMTADQVREVTEKMVREMWQELLNVDLGEFPVMPFSEAIRRFGSDKPDLRNPLELVDVADLVKDVEFKVFSGPANDEKGRVAVIRVPGGAELTRKQIDGYAEFVGIYGAKGLAWMKVNDRAAGVEGIQSPVAKFLSEDVINGILDRTQAESGDIILFGADKANIVAEALGALRLKLGKDLGLTKEGTWAPLWVVDFPMFEEDDEGNLHAMHHPFTSPLGVTAEELKANPAVANSNAYDMVLNGYEVGGGSVRIHNAEMQAAVFDILGIDAEEQQLKFGFLLDALKFGTPPHAGLAFGLDRLVMLLCGTENIRDVIAFPKTTAAACLLTDAPSIANPAALEELAIAVTAAKAKDAE</sequence>
<accession>Q87QV2</accession>
<protein>
    <recommendedName>
        <fullName evidence="1">Aspartate--tRNA ligase</fullName>
        <ecNumber evidence="1">6.1.1.12</ecNumber>
    </recommendedName>
    <alternativeName>
        <fullName evidence="1">Aspartyl-tRNA synthetase</fullName>
        <shortName evidence="1">AspRS</shortName>
    </alternativeName>
</protein>
<evidence type="ECO:0000255" key="1">
    <source>
        <dbReference type="HAMAP-Rule" id="MF_00044"/>
    </source>
</evidence>
<dbReference type="EC" id="6.1.1.12" evidence="1"/>
<dbReference type="EMBL" id="BA000031">
    <property type="protein sequence ID" value="BAC59310.1"/>
    <property type="molecule type" value="Genomic_DNA"/>
</dbReference>
<dbReference type="RefSeq" id="NP_797426.1">
    <property type="nucleotide sequence ID" value="NC_004603.1"/>
</dbReference>
<dbReference type="RefSeq" id="WP_005483110.1">
    <property type="nucleotide sequence ID" value="NC_004603.1"/>
</dbReference>
<dbReference type="SMR" id="Q87QV2"/>
<dbReference type="GeneID" id="1188551"/>
<dbReference type="KEGG" id="vpa:VP1047"/>
<dbReference type="PATRIC" id="fig|223926.6.peg.991"/>
<dbReference type="eggNOG" id="COG0173">
    <property type="taxonomic scope" value="Bacteria"/>
</dbReference>
<dbReference type="HOGENOM" id="CLU_014330_3_2_6"/>
<dbReference type="Proteomes" id="UP000002493">
    <property type="component" value="Chromosome 1"/>
</dbReference>
<dbReference type="GO" id="GO:0005737">
    <property type="term" value="C:cytoplasm"/>
    <property type="evidence" value="ECO:0007669"/>
    <property type="project" value="UniProtKB-SubCell"/>
</dbReference>
<dbReference type="GO" id="GO:0004815">
    <property type="term" value="F:aspartate-tRNA ligase activity"/>
    <property type="evidence" value="ECO:0007669"/>
    <property type="project" value="UniProtKB-UniRule"/>
</dbReference>
<dbReference type="GO" id="GO:0005524">
    <property type="term" value="F:ATP binding"/>
    <property type="evidence" value="ECO:0007669"/>
    <property type="project" value="UniProtKB-UniRule"/>
</dbReference>
<dbReference type="GO" id="GO:0003676">
    <property type="term" value="F:nucleic acid binding"/>
    <property type="evidence" value="ECO:0007669"/>
    <property type="project" value="InterPro"/>
</dbReference>
<dbReference type="GO" id="GO:0006422">
    <property type="term" value="P:aspartyl-tRNA aminoacylation"/>
    <property type="evidence" value="ECO:0007669"/>
    <property type="project" value="UniProtKB-UniRule"/>
</dbReference>
<dbReference type="CDD" id="cd00777">
    <property type="entry name" value="AspRS_core"/>
    <property type="match status" value="1"/>
</dbReference>
<dbReference type="CDD" id="cd04317">
    <property type="entry name" value="EcAspRS_like_N"/>
    <property type="match status" value="1"/>
</dbReference>
<dbReference type="FunFam" id="2.40.50.140:FF:000080">
    <property type="entry name" value="Aspartate--tRNA ligase"/>
    <property type="match status" value="1"/>
</dbReference>
<dbReference type="Gene3D" id="3.30.930.10">
    <property type="entry name" value="Bira Bifunctional Protein, Domain 2"/>
    <property type="match status" value="1"/>
</dbReference>
<dbReference type="Gene3D" id="3.30.1360.30">
    <property type="entry name" value="GAD-like domain"/>
    <property type="match status" value="1"/>
</dbReference>
<dbReference type="Gene3D" id="2.40.50.140">
    <property type="entry name" value="Nucleic acid-binding proteins"/>
    <property type="match status" value="1"/>
</dbReference>
<dbReference type="HAMAP" id="MF_00044">
    <property type="entry name" value="Asp_tRNA_synth_type1"/>
    <property type="match status" value="1"/>
</dbReference>
<dbReference type="InterPro" id="IPR004364">
    <property type="entry name" value="Aa-tRNA-synt_II"/>
</dbReference>
<dbReference type="InterPro" id="IPR006195">
    <property type="entry name" value="aa-tRNA-synth_II"/>
</dbReference>
<dbReference type="InterPro" id="IPR045864">
    <property type="entry name" value="aa-tRNA-synth_II/BPL/LPL"/>
</dbReference>
<dbReference type="InterPro" id="IPR004524">
    <property type="entry name" value="Asp-tRNA-ligase_1"/>
</dbReference>
<dbReference type="InterPro" id="IPR047089">
    <property type="entry name" value="Asp-tRNA-ligase_1_N"/>
</dbReference>
<dbReference type="InterPro" id="IPR002312">
    <property type="entry name" value="Asp/Asn-tRNA-synth_IIb"/>
</dbReference>
<dbReference type="InterPro" id="IPR047090">
    <property type="entry name" value="AspRS_core"/>
</dbReference>
<dbReference type="InterPro" id="IPR004115">
    <property type="entry name" value="GAD-like_sf"/>
</dbReference>
<dbReference type="InterPro" id="IPR029351">
    <property type="entry name" value="GAD_dom"/>
</dbReference>
<dbReference type="InterPro" id="IPR012340">
    <property type="entry name" value="NA-bd_OB-fold"/>
</dbReference>
<dbReference type="InterPro" id="IPR004365">
    <property type="entry name" value="NA-bd_OB_tRNA"/>
</dbReference>
<dbReference type="NCBIfam" id="TIGR00459">
    <property type="entry name" value="aspS_bact"/>
    <property type="match status" value="1"/>
</dbReference>
<dbReference type="NCBIfam" id="NF001750">
    <property type="entry name" value="PRK00476.1"/>
    <property type="match status" value="1"/>
</dbReference>
<dbReference type="PANTHER" id="PTHR22594:SF5">
    <property type="entry name" value="ASPARTATE--TRNA LIGASE, MITOCHONDRIAL"/>
    <property type="match status" value="1"/>
</dbReference>
<dbReference type="PANTHER" id="PTHR22594">
    <property type="entry name" value="ASPARTYL/LYSYL-TRNA SYNTHETASE"/>
    <property type="match status" value="1"/>
</dbReference>
<dbReference type="Pfam" id="PF02938">
    <property type="entry name" value="GAD"/>
    <property type="match status" value="1"/>
</dbReference>
<dbReference type="Pfam" id="PF00152">
    <property type="entry name" value="tRNA-synt_2"/>
    <property type="match status" value="1"/>
</dbReference>
<dbReference type="Pfam" id="PF01336">
    <property type="entry name" value="tRNA_anti-codon"/>
    <property type="match status" value="1"/>
</dbReference>
<dbReference type="PRINTS" id="PR01042">
    <property type="entry name" value="TRNASYNTHASP"/>
</dbReference>
<dbReference type="SUPFAM" id="SSF55681">
    <property type="entry name" value="Class II aaRS and biotin synthetases"/>
    <property type="match status" value="1"/>
</dbReference>
<dbReference type="SUPFAM" id="SSF55261">
    <property type="entry name" value="GAD domain-like"/>
    <property type="match status" value="1"/>
</dbReference>
<dbReference type="SUPFAM" id="SSF50249">
    <property type="entry name" value="Nucleic acid-binding proteins"/>
    <property type="match status" value="1"/>
</dbReference>
<dbReference type="PROSITE" id="PS50862">
    <property type="entry name" value="AA_TRNA_LIGASE_II"/>
    <property type="match status" value="1"/>
</dbReference>
<gene>
    <name evidence="1" type="primary">aspS</name>
    <name type="ordered locus">VP1047</name>
</gene>
<organism>
    <name type="scientific">Vibrio parahaemolyticus serotype O3:K6 (strain RIMD 2210633)</name>
    <dbReference type="NCBI Taxonomy" id="223926"/>
    <lineage>
        <taxon>Bacteria</taxon>
        <taxon>Pseudomonadati</taxon>
        <taxon>Pseudomonadota</taxon>
        <taxon>Gammaproteobacteria</taxon>
        <taxon>Vibrionales</taxon>
        <taxon>Vibrionaceae</taxon>
        <taxon>Vibrio</taxon>
    </lineage>
</organism>
<comment type="function">
    <text evidence="1">Catalyzes the attachment of L-aspartate to tRNA(Asp) in a two-step reaction: L-aspartate is first activated by ATP to form Asp-AMP and then transferred to the acceptor end of tRNA(Asp).</text>
</comment>
<comment type="catalytic activity">
    <reaction evidence="1">
        <text>tRNA(Asp) + L-aspartate + ATP = L-aspartyl-tRNA(Asp) + AMP + diphosphate</text>
        <dbReference type="Rhea" id="RHEA:19649"/>
        <dbReference type="Rhea" id="RHEA-COMP:9660"/>
        <dbReference type="Rhea" id="RHEA-COMP:9678"/>
        <dbReference type="ChEBI" id="CHEBI:29991"/>
        <dbReference type="ChEBI" id="CHEBI:30616"/>
        <dbReference type="ChEBI" id="CHEBI:33019"/>
        <dbReference type="ChEBI" id="CHEBI:78442"/>
        <dbReference type="ChEBI" id="CHEBI:78516"/>
        <dbReference type="ChEBI" id="CHEBI:456215"/>
        <dbReference type="EC" id="6.1.1.12"/>
    </reaction>
</comment>
<comment type="subunit">
    <text evidence="1">Homodimer.</text>
</comment>
<comment type="subcellular location">
    <subcellularLocation>
        <location evidence="1">Cytoplasm</location>
    </subcellularLocation>
</comment>
<comment type="similarity">
    <text evidence="1">Belongs to the class-II aminoacyl-tRNA synthetase family. Type 1 subfamily.</text>
</comment>
<feature type="chain" id="PRO_0000110977" description="Aspartate--tRNA ligase">
    <location>
        <begin position="1"/>
        <end position="592"/>
    </location>
</feature>
<feature type="region of interest" description="Aspartate" evidence="1">
    <location>
        <begin position="195"/>
        <end position="198"/>
    </location>
</feature>
<feature type="binding site" evidence="1">
    <location>
        <position position="171"/>
    </location>
    <ligand>
        <name>L-aspartate</name>
        <dbReference type="ChEBI" id="CHEBI:29991"/>
    </ligand>
</feature>
<feature type="binding site" evidence="1">
    <location>
        <begin position="217"/>
        <end position="219"/>
    </location>
    <ligand>
        <name>ATP</name>
        <dbReference type="ChEBI" id="CHEBI:30616"/>
    </ligand>
</feature>
<feature type="binding site" evidence="1">
    <location>
        <position position="217"/>
    </location>
    <ligand>
        <name>L-aspartate</name>
        <dbReference type="ChEBI" id="CHEBI:29991"/>
    </ligand>
</feature>
<feature type="binding site" evidence="1">
    <location>
        <position position="226"/>
    </location>
    <ligand>
        <name>ATP</name>
        <dbReference type="ChEBI" id="CHEBI:30616"/>
    </ligand>
</feature>
<feature type="binding site" evidence="1">
    <location>
        <position position="448"/>
    </location>
    <ligand>
        <name>L-aspartate</name>
        <dbReference type="ChEBI" id="CHEBI:29991"/>
    </ligand>
</feature>
<feature type="binding site" evidence="1">
    <location>
        <position position="482"/>
    </location>
    <ligand>
        <name>ATP</name>
        <dbReference type="ChEBI" id="CHEBI:30616"/>
    </ligand>
</feature>
<feature type="binding site" evidence="1">
    <location>
        <position position="489"/>
    </location>
    <ligand>
        <name>L-aspartate</name>
        <dbReference type="ChEBI" id="CHEBI:29991"/>
    </ligand>
</feature>
<feature type="binding site" evidence="1">
    <location>
        <begin position="534"/>
        <end position="537"/>
    </location>
    <ligand>
        <name>ATP</name>
        <dbReference type="ChEBI" id="CHEBI:30616"/>
    </ligand>
</feature>
<name>SYD_VIBPA</name>
<reference key="1">
    <citation type="journal article" date="2003" name="Lancet">
        <title>Genome sequence of Vibrio parahaemolyticus: a pathogenic mechanism distinct from that of V. cholerae.</title>
        <authorList>
            <person name="Makino K."/>
            <person name="Oshima K."/>
            <person name="Kurokawa K."/>
            <person name="Yokoyama K."/>
            <person name="Uda T."/>
            <person name="Tagomori K."/>
            <person name="Iijima Y."/>
            <person name="Najima M."/>
            <person name="Nakano M."/>
            <person name="Yamashita A."/>
            <person name="Kubota Y."/>
            <person name="Kimura S."/>
            <person name="Yasunaga T."/>
            <person name="Honda T."/>
            <person name="Shinagawa H."/>
            <person name="Hattori M."/>
            <person name="Iida T."/>
        </authorList>
    </citation>
    <scope>NUCLEOTIDE SEQUENCE [LARGE SCALE GENOMIC DNA]</scope>
    <source>
        <strain>RIMD 2210633</strain>
    </source>
</reference>